<comment type="subcellular location">
    <subcellularLocation>
        <location evidence="1">Membrane</location>
        <topology evidence="1">Multi-pass membrane protein</topology>
    </subcellularLocation>
</comment>
<comment type="similarity">
    <text evidence="4">Belongs to the UPF0359 family.</text>
</comment>
<organism>
    <name type="scientific">Danio rerio</name>
    <name type="common">Zebrafish</name>
    <name type="synonym">Brachydanio rerio</name>
    <dbReference type="NCBI Taxonomy" id="7955"/>
    <lineage>
        <taxon>Eukaryota</taxon>
        <taxon>Metazoa</taxon>
        <taxon>Chordata</taxon>
        <taxon>Craniata</taxon>
        <taxon>Vertebrata</taxon>
        <taxon>Euteleostomi</taxon>
        <taxon>Actinopterygii</taxon>
        <taxon>Neopterygii</taxon>
        <taxon>Teleostei</taxon>
        <taxon>Ostariophysi</taxon>
        <taxon>Cypriniformes</taxon>
        <taxon>Danionidae</taxon>
        <taxon>Danioninae</taxon>
        <taxon>Danio</taxon>
    </lineage>
</organism>
<evidence type="ECO:0000250" key="1"/>
<evidence type="ECO:0000255" key="2"/>
<evidence type="ECO:0000256" key="3">
    <source>
        <dbReference type="SAM" id="MobiDB-lite"/>
    </source>
</evidence>
<evidence type="ECO:0000305" key="4"/>
<feature type="chain" id="PRO_0000076103" description="Transmembrane protein adipocyte-associated 1 homolog">
    <location>
        <begin position="1"/>
        <end position="378"/>
    </location>
</feature>
<feature type="transmembrane region" description="Helical; Name=1" evidence="2">
    <location>
        <begin position="61"/>
        <end position="81"/>
    </location>
</feature>
<feature type="transmembrane region" description="Helical; Name=2" evidence="2">
    <location>
        <begin position="88"/>
        <end position="108"/>
    </location>
</feature>
<feature type="transmembrane region" description="Helical; Name=3" evidence="2">
    <location>
        <begin position="136"/>
        <end position="156"/>
    </location>
</feature>
<feature type="transmembrane region" description="Helical; Name=4" evidence="2">
    <location>
        <begin position="164"/>
        <end position="184"/>
    </location>
</feature>
<feature type="transmembrane region" description="Helical; Name=5" evidence="2">
    <location>
        <begin position="205"/>
        <end position="225"/>
    </location>
</feature>
<feature type="transmembrane region" description="Helical; Name=6" evidence="2">
    <location>
        <begin position="247"/>
        <end position="267"/>
    </location>
</feature>
<feature type="transmembrane region" description="Helical; Name=7" evidence="2">
    <location>
        <begin position="278"/>
        <end position="298"/>
    </location>
</feature>
<feature type="region of interest" description="Disordered" evidence="3">
    <location>
        <begin position="316"/>
        <end position="335"/>
    </location>
</feature>
<feature type="glycosylation site" description="N-linked (GlcNAc...) asparagine" evidence="2">
    <location>
        <position position="16"/>
    </location>
</feature>
<feature type="glycosylation site" description="N-linked (GlcNAc...) asparagine" evidence="2">
    <location>
        <position position="25"/>
    </location>
</feature>
<feature type="glycosylation site" description="N-linked (GlcNAc...) asparagine" evidence="2">
    <location>
        <position position="36"/>
    </location>
</feature>
<keyword id="KW-0325">Glycoprotein</keyword>
<keyword id="KW-0472">Membrane</keyword>
<keyword id="KW-1185">Reference proteome</keyword>
<keyword id="KW-0812">Transmembrane</keyword>
<keyword id="KW-1133">Transmembrane helix</keyword>
<name>TPRA1_DANRE</name>
<accession>Q4V8X0</accession>
<protein>
    <recommendedName>
        <fullName>Transmembrane protein adipocyte-associated 1 homolog</fullName>
    </recommendedName>
    <alternativeName>
        <fullName>Integral membrane protein GPR175</fullName>
    </alternativeName>
</protein>
<proteinExistence type="evidence at transcript level"/>
<reference key="1">
    <citation type="submission" date="2005-06" db="EMBL/GenBank/DDBJ databases">
        <authorList>
            <consortium name="NIH - Zebrafish Gene Collection (ZGC) project"/>
        </authorList>
    </citation>
    <scope>NUCLEOTIDE SEQUENCE [LARGE SCALE MRNA]</scope>
    <source>
        <tissue>Embryo</tissue>
    </source>
</reference>
<dbReference type="EMBL" id="BC097163">
    <property type="protein sequence ID" value="AAH97163.1"/>
    <property type="molecule type" value="mRNA"/>
</dbReference>
<dbReference type="RefSeq" id="NP_001025422.1">
    <property type="nucleotide sequence ID" value="NM_001030251.1"/>
</dbReference>
<dbReference type="FunCoup" id="Q4V8X0">
    <property type="interactions" value="405"/>
</dbReference>
<dbReference type="STRING" id="7955.ENSDARP00000071677"/>
<dbReference type="GlyCosmos" id="Q4V8X0">
    <property type="glycosylation" value="3 sites, No reported glycans"/>
</dbReference>
<dbReference type="PaxDb" id="7955-ENSDARP00000071677"/>
<dbReference type="Ensembl" id="ENSDART00000077209">
    <property type="protein sequence ID" value="ENSDARP00000071677"/>
    <property type="gene ID" value="ENSDARG00000054930"/>
</dbReference>
<dbReference type="GeneID" id="570573"/>
<dbReference type="KEGG" id="dre:570573"/>
<dbReference type="AGR" id="ZFIN:ZDB-GENE-030131-4146"/>
<dbReference type="CTD" id="131601"/>
<dbReference type="ZFIN" id="ZDB-GENE-030131-4146">
    <property type="gene designation" value="tpra1"/>
</dbReference>
<dbReference type="eggNOG" id="KOG4536">
    <property type="taxonomic scope" value="Eukaryota"/>
</dbReference>
<dbReference type="HOGENOM" id="CLU_056255_0_0_1"/>
<dbReference type="InParanoid" id="Q4V8X0"/>
<dbReference type="OMA" id="DRWKSIN"/>
<dbReference type="OrthoDB" id="10027388at2759"/>
<dbReference type="PhylomeDB" id="Q4V8X0"/>
<dbReference type="TreeFam" id="TF314072"/>
<dbReference type="PRO" id="PR:Q4V8X0"/>
<dbReference type="Proteomes" id="UP000000437">
    <property type="component" value="Chromosome 6"/>
</dbReference>
<dbReference type="Bgee" id="ENSDARG00000054930">
    <property type="expression patterns" value="Expressed in spleen and 20 other cell types or tissues"/>
</dbReference>
<dbReference type="GO" id="GO:0005886">
    <property type="term" value="C:plasma membrane"/>
    <property type="evidence" value="ECO:0000318"/>
    <property type="project" value="GO_Central"/>
</dbReference>
<dbReference type="GO" id="GO:0004930">
    <property type="term" value="F:G protein-coupled receptor activity"/>
    <property type="evidence" value="ECO:0000318"/>
    <property type="project" value="GO_Central"/>
</dbReference>
<dbReference type="GO" id="GO:0007186">
    <property type="term" value="P:G protein-coupled receptor signaling pathway"/>
    <property type="evidence" value="ECO:0000318"/>
    <property type="project" value="GO_Central"/>
</dbReference>
<dbReference type="InterPro" id="IPR018781">
    <property type="entry name" value="TPRA1/CAND2/CAND8"/>
</dbReference>
<dbReference type="PANTHER" id="PTHR15876">
    <property type="entry name" value="TRANSMEMBRANE PROTEIN ADIPOCYTE-ASSOCIATED 1"/>
    <property type="match status" value="1"/>
</dbReference>
<dbReference type="PANTHER" id="PTHR15876:SF8">
    <property type="entry name" value="TRANSMEMBRANE PROTEIN ADIPOCYTE-ASSOCIATED 1"/>
    <property type="match status" value="1"/>
</dbReference>
<dbReference type="Pfam" id="PF10160">
    <property type="entry name" value="Tmemb_40"/>
    <property type="match status" value="1"/>
</dbReference>
<sequence>MLETVTDVASFVHYGNTSVFPTADNSSEIIPDGESNISKPHRCLQVLYDDIGTSRVRYWDVMLLIPNVAFLVFLMWKLPSARAKIRLTSSPIFVAFYILVFVVAAVGITRAIVSMTVSTSSAATLIDKVLWEITRFFLLAIELSVIILGLAFGHLESKSSIKRVLAITAVLSLAYSITQGTLEIRFPDKHLSAKDFNIYGHGGRHFWLASSCFFFLVYSLIVILPKTPIRERISLPSKRSFYVYSGILALLNLVQGLGSALLCADIIEGLCCVDVTTFLYFSVFAPLIYVTFLKGFFGSEPKILFSYKSQIDEPEDSDVHLPHTSSSGLGRKDLDRGSYSSTQIDGSGAYLDDVVSGPFGGAHSINSVDSDRWRSINT</sequence>
<gene>
    <name type="primary">tpra1</name>
    <name type="synonym">gpr175</name>
    <name type="ORF">zgc:114103</name>
</gene>